<dbReference type="EC" id="7.5.2.-" evidence="2"/>
<dbReference type="EMBL" id="AE014295">
    <property type="protein sequence ID" value="AAN23901.1"/>
    <property type="molecule type" value="Genomic_DNA"/>
</dbReference>
<dbReference type="RefSeq" id="NP_695265.1">
    <property type="nucleotide sequence ID" value="NC_004307.2"/>
</dbReference>
<dbReference type="RefSeq" id="WP_007053223.1">
    <property type="nucleotide sequence ID" value="NC_004307.2"/>
</dbReference>
<dbReference type="SMR" id="Q8G847"/>
<dbReference type="STRING" id="206672.BL0034"/>
<dbReference type="TCDB" id="3.A.1.2.23">
    <property type="family name" value="the atp-binding cassette (abc) superfamily"/>
</dbReference>
<dbReference type="EnsemblBacteria" id="AAN23901">
    <property type="protein sequence ID" value="AAN23901"/>
    <property type="gene ID" value="BL0034"/>
</dbReference>
<dbReference type="KEGG" id="blo:BL0034"/>
<dbReference type="PATRIC" id="fig|206672.9.peg.36"/>
<dbReference type="HOGENOM" id="CLU_000604_92_3_11"/>
<dbReference type="OrthoDB" id="39350at2"/>
<dbReference type="PhylomeDB" id="Q8G847"/>
<dbReference type="Proteomes" id="UP000000439">
    <property type="component" value="Chromosome"/>
</dbReference>
<dbReference type="GO" id="GO:0005886">
    <property type="term" value="C:plasma membrane"/>
    <property type="evidence" value="ECO:0007669"/>
    <property type="project" value="UniProtKB-SubCell"/>
</dbReference>
<dbReference type="GO" id="GO:0005524">
    <property type="term" value="F:ATP binding"/>
    <property type="evidence" value="ECO:0007669"/>
    <property type="project" value="UniProtKB-KW"/>
</dbReference>
<dbReference type="GO" id="GO:0016887">
    <property type="term" value="F:ATP hydrolysis activity"/>
    <property type="evidence" value="ECO:0007669"/>
    <property type="project" value="InterPro"/>
</dbReference>
<dbReference type="CDD" id="cd03216">
    <property type="entry name" value="ABC_Carb_Monos_I"/>
    <property type="match status" value="1"/>
</dbReference>
<dbReference type="CDD" id="cd03215">
    <property type="entry name" value="ABC_Carb_Monos_II"/>
    <property type="match status" value="1"/>
</dbReference>
<dbReference type="FunFam" id="3.40.50.300:FF:000127">
    <property type="entry name" value="Ribose import ATP-binding protein RbsA"/>
    <property type="match status" value="1"/>
</dbReference>
<dbReference type="Gene3D" id="3.40.50.300">
    <property type="entry name" value="P-loop containing nucleotide triphosphate hydrolases"/>
    <property type="match status" value="2"/>
</dbReference>
<dbReference type="InterPro" id="IPR003593">
    <property type="entry name" value="AAA+_ATPase"/>
</dbReference>
<dbReference type="InterPro" id="IPR050107">
    <property type="entry name" value="ABC_carbohydrate_import_ATPase"/>
</dbReference>
<dbReference type="InterPro" id="IPR003439">
    <property type="entry name" value="ABC_transporter-like_ATP-bd"/>
</dbReference>
<dbReference type="InterPro" id="IPR017871">
    <property type="entry name" value="ABC_transporter-like_CS"/>
</dbReference>
<dbReference type="InterPro" id="IPR027417">
    <property type="entry name" value="P-loop_NTPase"/>
</dbReference>
<dbReference type="PANTHER" id="PTHR43790">
    <property type="entry name" value="CARBOHYDRATE TRANSPORT ATP-BINDING PROTEIN MG119-RELATED"/>
    <property type="match status" value="1"/>
</dbReference>
<dbReference type="PANTHER" id="PTHR43790:SF9">
    <property type="entry name" value="GALACTOFURANOSE TRANSPORTER ATP-BINDING PROTEIN YTFR"/>
    <property type="match status" value="1"/>
</dbReference>
<dbReference type="Pfam" id="PF00005">
    <property type="entry name" value="ABC_tran"/>
    <property type="match status" value="2"/>
</dbReference>
<dbReference type="SMART" id="SM00382">
    <property type="entry name" value="AAA"/>
    <property type="match status" value="2"/>
</dbReference>
<dbReference type="SUPFAM" id="SSF52540">
    <property type="entry name" value="P-loop containing nucleoside triphosphate hydrolases"/>
    <property type="match status" value="2"/>
</dbReference>
<dbReference type="PROSITE" id="PS00211">
    <property type="entry name" value="ABC_TRANSPORTER_1"/>
    <property type="match status" value="1"/>
</dbReference>
<dbReference type="PROSITE" id="PS50893">
    <property type="entry name" value="ABC_TRANSPORTER_2"/>
    <property type="match status" value="2"/>
</dbReference>
<reference key="1">
    <citation type="journal article" date="2002" name="Proc. Natl. Acad. Sci. U.S.A.">
        <title>The genome sequence of Bifidobacterium longum reflects its adaptation to the human gastrointestinal tract.</title>
        <authorList>
            <person name="Schell M.A."/>
            <person name="Karmirantzou M."/>
            <person name="Snel B."/>
            <person name="Vilanova D."/>
            <person name="Berger B."/>
            <person name="Pessi G."/>
            <person name="Zwahlen M.-C."/>
            <person name="Desiere F."/>
            <person name="Bork P."/>
            <person name="Delley M."/>
            <person name="Pridmore R.D."/>
            <person name="Arigoni F."/>
        </authorList>
    </citation>
    <scope>NUCLEOTIDE SEQUENCE [LARGE SCALE GENOMIC DNA]</scope>
    <source>
        <strain>NCC 2705</strain>
    </source>
</reference>
<reference key="2">
    <citation type="journal article" date="2012" name="J. Biol. Chem.">
        <title>Fructose uptake in Bifidobacterium longum NCC2705 is mediated by an ATP-binding cassette transporter.</title>
        <authorList>
            <person name="Wei X."/>
            <person name="Guo Y."/>
            <person name="Shao C."/>
            <person name="Sun Z."/>
            <person name="Zhurina D."/>
            <person name="Liu D."/>
            <person name="Liu W."/>
            <person name="Zou D."/>
            <person name="Jiang Z."/>
            <person name="Wang X."/>
            <person name="Zhao J."/>
            <person name="Shang W."/>
            <person name="Li X."/>
            <person name="Liao X."/>
            <person name="Huang L."/>
            <person name="Riedel C.U."/>
            <person name="Yuan J."/>
        </authorList>
    </citation>
    <scope>FUNCTION</scope>
    <scope>CATALYTIC ACTIVITY</scope>
    <scope>SUBUNIT</scope>
    <scope>INTERACTION WITH FRUF AND FRUG</scope>
    <source>
        <strain>NCC 2705</strain>
    </source>
</reference>
<feature type="chain" id="PRO_0000439269" description="Fructose import ATP-binding protein FruK">
    <location>
        <begin position="1"/>
        <end position="513"/>
    </location>
</feature>
<feature type="domain" description="ABC transporter 1" evidence="1">
    <location>
        <begin position="8"/>
        <end position="244"/>
    </location>
</feature>
<feature type="domain" description="ABC transporter 2" evidence="1">
    <location>
        <begin position="262"/>
        <end position="505"/>
    </location>
</feature>
<feature type="binding site" evidence="1">
    <location>
        <begin position="40"/>
        <end position="47"/>
    </location>
    <ligand>
        <name>ATP</name>
        <dbReference type="ChEBI" id="CHEBI:30616"/>
    </ligand>
</feature>
<proteinExistence type="evidence at protein level"/>
<sequence>MTDKNPIVVMKGITIEFPGVKALDGVDLTLYPGEVHALMGENGAGKSTMIKALTGVYKINAGSIMVDGKPQQFNGTLDAQNAGIATVYQEVNLCTNLSVGENVMLGHEKRGPFGIDWKKTHEAAKKYLAQMGLESIDPHTPLSSISIAMQQLVAIARAMVINAKVLILDEPTSSLDANEVRDLFAIMRKVRDSGVAILFVSHFLDQIYEITDRLTILRNGQFIKEVMTKDTPRDELIGMMIGKSAAELSQIGAKKARREITPGEKPIVDVKGLGKKGTINPVDVDIYKGEVVGFAGLLGSGRTELGRLLYGADKPDSGTYTLNGKKVNISDPYTALKNKIAYSTENRRDEGIIGDLTVRQNILIALQATRGMFKPIPKKEADAIVDKYMKELNVRPADPDRPVKNLSGGNQQKVLIGRWLATHPELLILDEPTRGIDIGAKAEIQQVVLDLASQGMGVVFISSELEEVVRLSDDIEVLKDRHKIAEIENDDTVSQATIVETIANTNVNTGKEA</sequence>
<accession>Q8G847</accession>
<organism>
    <name type="scientific">Bifidobacterium longum (strain NCC 2705)</name>
    <dbReference type="NCBI Taxonomy" id="206672"/>
    <lineage>
        <taxon>Bacteria</taxon>
        <taxon>Bacillati</taxon>
        <taxon>Actinomycetota</taxon>
        <taxon>Actinomycetes</taxon>
        <taxon>Bifidobacteriales</taxon>
        <taxon>Bifidobacteriaceae</taxon>
        <taxon>Bifidobacterium</taxon>
    </lineage>
</organism>
<protein>
    <recommendedName>
        <fullName evidence="4">Fructose import ATP-binding protein FruK</fullName>
        <ecNumber evidence="2">7.5.2.-</ecNumber>
    </recommendedName>
</protein>
<comment type="function">
    <text evidence="2">Part of the high-affinity ABC transporter complex FruEKFG involved in fructose uptake. Can also transport ribose and xylose, with lower affinity. Probably responsible for energy coupling to the transport system.</text>
</comment>
<comment type="catalytic activity">
    <reaction evidence="2">
        <text>D-fructose(out) + ATP + H2O = D-fructose(in) + ADP + phosphate + H(+)</text>
        <dbReference type="Rhea" id="RHEA:60180"/>
        <dbReference type="ChEBI" id="CHEBI:15377"/>
        <dbReference type="ChEBI" id="CHEBI:15378"/>
        <dbReference type="ChEBI" id="CHEBI:30616"/>
        <dbReference type="ChEBI" id="CHEBI:37721"/>
        <dbReference type="ChEBI" id="CHEBI:43474"/>
        <dbReference type="ChEBI" id="CHEBI:456216"/>
    </reaction>
    <physiologicalReaction direction="left-to-right" evidence="2">
        <dbReference type="Rhea" id="RHEA:60181"/>
    </physiologicalReaction>
</comment>
<comment type="subunit">
    <text evidence="2">The complex is composed of an ATP-binding protein (FruK), two transmembrane proteins (FruF and FruG) and a solute-binding protein (FruE).</text>
</comment>
<comment type="subcellular location">
    <subcellularLocation>
        <location evidence="4">Cell membrane</location>
        <topology evidence="4">Peripheral membrane protein</topology>
        <orientation evidence="4">Cytoplasmic side</orientation>
    </subcellularLocation>
</comment>
<comment type="similarity">
    <text evidence="4">Belongs to the ABC transporter superfamily.</text>
</comment>
<gene>
    <name evidence="3" type="primary">fruK</name>
    <name evidence="5" type="ordered locus">BL0034</name>
</gene>
<keyword id="KW-0067">ATP-binding</keyword>
<keyword id="KW-1003">Cell membrane</keyword>
<keyword id="KW-0472">Membrane</keyword>
<keyword id="KW-0547">Nucleotide-binding</keyword>
<keyword id="KW-1185">Reference proteome</keyword>
<keyword id="KW-0677">Repeat</keyword>
<keyword id="KW-0762">Sugar transport</keyword>
<keyword id="KW-1278">Translocase</keyword>
<keyword id="KW-0813">Transport</keyword>
<name>FRUK_BIFLO</name>
<evidence type="ECO:0000255" key="1">
    <source>
        <dbReference type="PROSITE-ProRule" id="PRU00434"/>
    </source>
</evidence>
<evidence type="ECO:0000269" key="2">
    <source>
    </source>
</evidence>
<evidence type="ECO:0000303" key="3">
    <source>
    </source>
</evidence>
<evidence type="ECO:0000305" key="4"/>
<evidence type="ECO:0000312" key="5">
    <source>
        <dbReference type="EMBL" id="AAN23901.1"/>
    </source>
</evidence>